<accession>B9JYQ5</accession>
<keyword id="KW-0067">ATP-binding</keyword>
<keyword id="KW-0963">Cytoplasm</keyword>
<keyword id="KW-0324">Glycolysis</keyword>
<keyword id="KW-0418">Kinase</keyword>
<keyword id="KW-0547">Nucleotide-binding</keyword>
<keyword id="KW-1185">Reference proteome</keyword>
<keyword id="KW-0808">Transferase</keyword>
<comment type="catalytic activity">
    <reaction evidence="1">
        <text>D-glucose + ATP = D-glucose 6-phosphate + ADP + H(+)</text>
        <dbReference type="Rhea" id="RHEA:17825"/>
        <dbReference type="ChEBI" id="CHEBI:4167"/>
        <dbReference type="ChEBI" id="CHEBI:15378"/>
        <dbReference type="ChEBI" id="CHEBI:30616"/>
        <dbReference type="ChEBI" id="CHEBI:61548"/>
        <dbReference type="ChEBI" id="CHEBI:456216"/>
        <dbReference type="EC" id="2.7.1.2"/>
    </reaction>
</comment>
<comment type="subcellular location">
    <subcellularLocation>
        <location evidence="1">Cytoplasm</location>
    </subcellularLocation>
</comment>
<comment type="similarity">
    <text evidence="1">Belongs to the bacterial glucokinase family.</text>
</comment>
<proteinExistence type="inferred from homology"/>
<feature type="chain" id="PRO_1000146248" description="Glucokinase">
    <location>
        <begin position="1"/>
        <end position="340"/>
    </location>
</feature>
<feature type="binding site" evidence="1">
    <location>
        <begin position="17"/>
        <end position="22"/>
    </location>
    <ligand>
        <name>ATP</name>
        <dbReference type="ChEBI" id="CHEBI:30616"/>
    </ligand>
</feature>
<sequence length="340" mass="36916">MPKPHDNDHMPFPVLVGDIGGTNARFWILMDAHAAPKEFANIHTADFPTIDQAIQDCILDKSGFQPRSAILAVAGPIKDDEIPLTNCPWVIRPKAMIADLGFDDVLVVNDFEAQALAAASLGRNDREPIGPLTETSLNSRVILGPGTGLGVGGLLYTHHTWFPVPGEGGHVDIGPRSDRDWQIFPHIERIEGRISGEQILCGRGILHLYNAICAADGIEPVWTDPADVTQHALKGNDPVCVETMTLFVTYLGRIAGDMALVFMARGGVFLSGGISQKIIPLLKSPVFRAAFEDKAPHTEMMKTIPTFVAIHPQAALSGLAAYARTPSSYGVKHEGRRWQR</sequence>
<dbReference type="EC" id="2.7.1.2" evidence="1"/>
<dbReference type="EMBL" id="CP000633">
    <property type="protein sequence ID" value="ACM35151.1"/>
    <property type="molecule type" value="Genomic_DNA"/>
</dbReference>
<dbReference type="RefSeq" id="WP_012654681.1">
    <property type="nucleotide sequence ID" value="NC_011989.1"/>
</dbReference>
<dbReference type="SMR" id="B9JYQ5"/>
<dbReference type="STRING" id="311402.Avi_0239"/>
<dbReference type="KEGG" id="avi:Avi_0239"/>
<dbReference type="eggNOG" id="COG0837">
    <property type="taxonomic scope" value="Bacteria"/>
</dbReference>
<dbReference type="HOGENOM" id="CLU_042582_1_0_5"/>
<dbReference type="Proteomes" id="UP000001596">
    <property type="component" value="Chromosome 1"/>
</dbReference>
<dbReference type="GO" id="GO:0005829">
    <property type="term" value="C:cytosol"/>
    <property type="evidence" value="ECO:0007669"/>
    <property type="project" value="TreeGrafter"/>
</dbReference>
<dbReference type="GO" id="GO:0005524">
    <property type="term" value="F:ATP binding"/>
    <property type="evidence" value="ECO:0007669"/>
    <property type="project" value="UniProtKB-UniRule"/>
</dbReference>
<dbReference type="GO" id="GO:0005536">
    <property type="term" value="F:D-glucose binding"/>
    <property type="evidence" value="ECO:0007669"/>
    <property type="project" value="InterPro"/>
</dbReference>
<dbReference type="GO" id="GO:0004340">
    <property type="term" value="F:glucokinase activity"/>
    <property type="evidence" value="ECO:0007669"/>
    <property type="project" value="UniProtKB-UniRule"/>
</dbReference>
<dbReference type="GO" id="GO:0006096">
    <property type="term" value="P:glycolytic process"/>
    <property type="evidence" value="ECO:0007669"/>
    <property type="project" value="UniProtKB-UniRule"/>
</dbReference>
<dbReference type="CDD" id="cd24008">
    <property type="entry name" value="ASKHA_NBD_GLK"/>
    <property type="match status" value="1"/>
</dbReference>
<dbReference type="Gene3D" id="3.30.420.40">
    <property type="match status" value="1"/>
</dbReference>
<dbReference type="Gene3D" id="3.40.367.20">
    <property type="match status" value="1"/>
</dbReference>
<dbReference type="HAMAP" id="MF_00524">
    <property type="entry name" value="Glucokinase"/>
    <property type="match status" value="1"/>
</dbReference>
<dbReference type="InterPro" id="IPR043129">
    <property type="entry name" value="ATPase_NBD"/>
</dbReference>
<dbReference type="InterPro" id="IPR050201">
    <property type="entry name" value="Bacterial_glucokinase"/>
</dbReference>
<dbReference type="InterPro" id="IPR003836">
    <property type="entry name" value="Glucokinase"/>
</dbReference>
<dbReference type="NCBIfam" id="TIGR00749">
    <property type="entry name" value="glk"/>
    <property type="match status" value="1"/>
</dbReference>
<dbReference type="NCBIfam" id="NF001417">
    <property type="entry name" value="PRK00292.1-4"/>
    <property type="match status" value="1"/>
</dbReference>
<dbReference type="PANTHER" id="PTHR47690">
    <property type="entry name" value="GLUCOKINASE"/>
    <property type="match status" value="1"/>
</dbReference>
<dbReference type="PANTHER" id="PTHR47690:SF1">
    <property type="entry name" value="GLUCOKINASE"/>
    <property type="match status" value="1"/>
</dbReference>
<dbReference type="Pfam" id="PF02685">
    <property type="entry name" value="Glucokinase"/>
    <property type="match status" value="1"/>
</dbReference>
<dbReference type="SUPFAM" id="SSF53067">
    <property type="entry name" value="Actin-like ATPase domain"/>
    <property type="match status" value="1"/>
</dbReference>
<name>GLK_ALLAM</name>
<gene>
    <name evidence="1" type="primary">glk</name>
    <name type="ordered locus">Avi_0239</name>
</gene>
<protein>
    <recommendedName>
        <fullName evidence="1">Glucokinase</fullName>
        <ecNumber evidence="1">2.7.1.2</ecNumber>
    </recommendedName>
    <alternativeName>
        <fullName evidence="1">Glucose kinase</fullName>
    </alternativeName>
</protein>
<reference key="1">
    <citation type="journal article" date="2009" name="J. Bacteriol.">
        <title>Genome sequences of three Agrobacterium biovars help elucidate the evolution of multichromosome genomes in bacteria.</title>
        <authorList>
            <person name="Slater S.C."/>
            <person name="Goldman B.S."/>
            <person name="Goodner B."/>
            <person name="Setubal J.C."/>
            <person name="Farrand S.K."/>
            <person name="Nester E.W."/>
            <person name="Burr T.J."/>
            <person name="Banta L."/>
            <person name="Dickerman A.W."/>
            <person name="Paulsen I."/>
            <person name="Otten L."/>
            <person name="Suen G."/>
            <person name="Welch R."/>
            <person name="Almeida N.F."/>
            <person name="Arnold F."/>
            <person name="Burton O.T."/>
            <person name="Du Z."/>
            <person name="Ewing A."/>
            <person name="Godsy E."/>
            <person name="Heisel S."/>
            <person name="Houmiel K.L."/>
            <person name="Jhaveri J."/>
            <person name="Lu J."/>
            <person name="Miller N.M."/>
            <person name="Norton S."/>
            <person name="Chen Q."/>
            <person name="Phoolcharoen W."/>
            <person name="Ohlin V."/>
            <person name="Ondrusek D."/>
            <person name="Pride N."/>
            <person name="Stricklin S.L."/>
            <person name="Sun J."/>
            <person name="Wheeler C."/>
            <person name="Wilson L."/>
            <person name="Zhu H."/>
            <person name="Wood D.W."/>
        </authorList>
    </citation>
    <scope>NUCLEOTIDE SEQUENCE [LARGE SCALE GENOMIC DNA]</scope>
    <source>
        <strain>ATCC BAA-846 / DSM 112012 / S4</strain>
    </source>
</reference>
<organism>
    <name type="scientific">Allorhizobium ampelinum (strain ATCC BAA-846 / DSM 112012 / S4)</name>
    <name type="common">Agrobacterium vitis (strain S4)</name>
    <dbReference type="NCBI Taxonomy" id="311402"/>
    <lineage>
        <taxon>Bacteria</taxon>
        <taxon>Pseudomonadati</taxon>
        <taxon>Pseudomonadota</taxon>
        <taxon>Alphaproteobacteria</taxon>
        <taxon>Hyphomicrobiales</taxon>
        <taxon>Rhizobiaceae</taxon>
        <taxon>Rhizobium/Agrobacterium group</taxon>
        <taxon>Allorhizobium</taxon>
        <taxon>Allorhizobium ampelinum</taxon>
    </lineage>
</organism>
<evidence type="ECO:0000255" key="1">
    <source>
        <dbReference type="HAMAP-Rule" id="MF_00524"/>
    </source>
</evidence>